<evidence type="ECO:0000255" key="1">
    <source>
        <dbReference type="HAMAP-Rule" id="MF_00340"/>
    </source>
</evidence>
<evidence type="ECO:0000256" key="2">
    <source>
        <dbReference type="SAM" id="MobiDB-lite"/>
    </source>
</evidence>
<evidence type="ECO:0000305" key="3"/>
<name>RL32_ACISJ</name>
<sequence length="60" mass="6705">MAVQQNKKSPSKRGMHRSHNALTVPGIAVEPTTGETHMRHHISPNGFYRGRQVLKNKSEA</sequence>
<reference key="1">
    <citation type="submission" date="2006-12" db="EMBL/GenBank/DDBJ databases">
        <title>Complete sequence of chromosome 1 of Acidovorax sp. JS42.</title>
        <authorList>
            <person name="Copeland A."/>
            <person name="Lucas S."/>
            <person name="Lapidus A."/>
            <person name="Barry K."/>
            <person name="Detter J.C."/>
            <person name="Glavina del Rio T."/>
            <person name="Dalin E."/>
            <person name="Tice H."/>
            <person name="Pitluck S."/>
            <person name="Chertkov O."/>
            <person name="Brettin T."/>
            <person name="Bruce D."/>
            <person name="Han C."/>
            <person name="Tapia R."/>
            <person name="Gilna P."/>
            <person name="Schmutz J."/>
            <person name="Larimer F."/>
            <person name="Land M."/>
            <person name="Hauser L."/>
            <person name="Kyrpides N."/>
            <person name="Kim E."/>
            <person name="Stahl D."/>
            <person name="Richardson P."/>
        </authorList>
    </citation>
    <scope>NUCLEOTIDE SEQUENCE [LARGE SCALE GENOMIC DNA]</scope>
    <source>
        <strain>JS42</strain>
    </source>
</reference>
<accession>A1WAY0</accession>
<comment type="similarity">
    <text evidence="1">Belongs to the bacterial ribosomal protein bL32 family.</text>
</comment>
<dbReference type="EMBL" id="CP000539">
    <property type="protein sequence ID" value="ABM43405.1"/>
    <property type="molecule type" value="Genomic_DNA"/>
</dbReference>
<dbReference type="SMR" id="A1WAY0"/>
<dbReference type="STRING" id="232721.Ajs_3282"/>
<dbReference type="KEGG" id="ajs:Ajs_3282"/>
<dbReference type="eggNOG" id="COG0333">
    <property type="taxonomic scope" value="Bacteria"/>
</dbReference>
<dbReference type="HOGENOM" id="CLU_129084_2_1_4"/>
<dbReference type="Proteomes" id="UP000000645">
    <property type="component" value="Chromosome"/>
</dbReference>
<dbReference type="GO" id="GO:0015934">
    <property type="term" value="C:large ribosomal subunit"/>
    <property type="evidence" value="ECO:0007669"/>
    <property type="project" value="InterPro"/>
</dbReference>
<dbReference type="GO" id="GO:0003735">
    <property type="term" value="F:structural constituent of ribosome"/>
    <property type="evidence" value="ECO:0007669"/>
    <property type="project" value="InterPro"/>
</dbReference>
<dbReference type="GO" id="GO:0006412">
    <property type="term" value="P:translation"/>
    <property type="evidence" value="ECO:0007669"/>
    <property type="project" value="UniProtKB-UniRule"/>
</dbReference>
<dbReference type="HAMAP" id="MF_00340">
    <property type="entry name" value="Ribosomal_bL32"/>
    <property type="match status" value="1"/>
</dbReference>
<dbReference type="InterPro" id="IPR002677">
    <property type="entry name" value="Ribosomal_bL32"/>
</dbReference>
<dbReference type="InterPro" id="IPR044957">
    <property type="entry name" value="Ribosomal_bL32_bact"/>
</dbReference>
<dbReference type="InterPro" id="IPR011332">
    <property type="entry name" value="Ribosomal_zn-bd"/>
</dbReference>
<dbReference type="NCBIfam" id="TIGR01031">
    <property type="entry name" value="rpmF_bact"/>
    <property type="match status" value="1"/>
</dbReference>
<dbReference type="PANTHER" id="PTHR35534">
    <property type="entry name" value="50S RIBOSOMAL PROTEIN L32"/>
    <property type="match status" value="1"/>
</dbReference>
<dbReference type="PANTHER" id="PTHR35534:SF1">
    <property type="entry name" value="LARGE RIBOSOMAL SUBUNIT PROTEIN BL32"/>
    <property type="match status" value="1"/>
</dbReference>
<dbReference type="Pfam" id="PF01783">
    <property type="entry name" value="Ribosomal_L32p"/>
    <property type="match status" value="1"/>
</dbReference>
<dbReference type="SUPFAM" id="SSF57829">
    <property type="entry name" value="Zn-binding ribosomal proteins"/>
    <property type="match status" value="1"/>
</dbReference>
<keyword id="KW-0687">Ribonucleoprotein</keyword>
<keyword id="KW-0689">Ribosomal protein</keyword>
<organism>
    <name type="scientific">Acidovorax sp. (strain JS42)</name>
    <dbReference type="NCBI Taxonomy" id="232721"/>
    <lineage>
        <taxon>Bacteria</taxon>
        <taxon>Pseudomonadati</taxon>
        <taxon>Pseudomonadota</taxon>
        <taxon>Betaproteobacteria</taxon>
        <taxon>Burkholderiales</taxon>
        <taxon>Comamonadaceae</taxon>
        <taxon>Acidovorax</taxon>
    </lineage>
</organism>
<protein>
    <recommendedName>
        <fullName evidence="1">Large ribosomal subunit protein bL32</fullName>
    </recommendedName>
    <alternativeName>
        <fullName evidence="3">50S ribosomal protein L32</fullName>
    </alternativeName>
</protein>
<proteinExistence type="inferred from homology"/>
<feature type="chain" id="PRO_0000296411" description="Large ribosomal subunit protein bL32">
    <location>
        <begin position="1"/>
        <end position="60"/>
    </location>
</feature>
<feature type="region of interest" description="Disordered" evidence="2">
    <location>
        <begin position="1"/>
        <end position="60"/>
    </location>
</feature>
<feature type="compositionally biased region" description="Basic residues" evidence="2">
    <location>
        <begin position="9"/>
        <end position="19"/>
    </location>
</feature>
<gene>
    <name evidence="1" type="primary">rpmF</name>
    <name type="ordered locus">Ajs_3282</name>
</gene>